<protein>
    <recommendedName>
        <fullName evidence="1">Protein DsrB</fullName>
    </recommendedName>
</protein>
<name>DSRB_YERPP</name>
<proteinExistence type="inferred from homology"/>
<gene>
    <name evidence="1" type="primary">dsrB</name>
    <name type="ordered locus">YPDSF_1790</name>
</gene>
<comment type="similarity">
    <text evidence="1">Belongs to the DsrB family.</text>
</comment>
<evidence type="ECO:0000255" key="1">
    <source>
        <dbReference type="HAMAP-Rule" id="MF_01549"/>
    </source>
</evidence>
<reference key="1">
    <citation type="submission" date="2007-02" db="EMBL/GenBank/DDBJ databases">
        <title>Complete sequence of chromosome of Yersinia pestis Pestoides F.</title>
        <authorList>
            <consortium name="US DOE Joint Genome Institute"/>
            <person name="Copeland A."/>
            <person name="Lucas S."/>
            <person name="Lapidus A."/>
            <person name="Barry K."/>
            <person name="Detter J.C."/>
            <person name="Glavina del Rio T."/>
            <person name="Hammon N."/>
            <person name="Israni S."/>
            <person name="Dalin E."/>
            <person name="Tice H."/>
            <person name="Pitluck S."/>
            <person name="Di Bartolo G."/>
            <person name="Chain P."/>
            <person name="Malfatti S."/>
            <person name="Shin M."/>
            <person name="Vergez L."/>
            <person name="Schmutz J."/>
            <person name="Larimer F."/>
            <person name="Land M."/>
            <person name="Hauser L."/>
            <person name="Worsham P."/>
            <person name="Chu M."/>
            <person name="Bearden S."/>
            <person name="Garcia E."/>
            <person name="Richardson P."/>
        </authorList>
    </citation>
    <scope>NUCLEOTIDE SEQUENCE [LARGE SCALE GENOMIC DNA]</scope>
    <source>
        <strain>Pestoides F</strain>
    </source>
</reference>
<feature type="chain" id="PRO_0000300622" description="Protein DsrB">
    <location>
        <begin position="1"/>
        <end position="63"/>
    </location>
</feature>
<accession>A4TLL3</accession>
<dbReference type="EMBL" id="CP000668">
    <property type="protein sequence ID" value="ABP40175.1"/>
    <property type="molecule type" value="Genomic_DNA"/>
</dbReference>
<dbReference type="RefSeq" id="WP_002210892.1">
    <property type="nucleotide sequence ID" value="NZ_CP009715.1"/>
</dbReference>
<dbReference type="SMR" id="A4TLL3"/>
<dbReference type="GeneID" id="96666536"/>
<dbReference type="KEGG" id="ypp:YPDSF_1790"/>
<dbReference type="PATRIC" id="fig|386656.14.peg.3245"/>
<dbReference type="HAMAP" id="MF_01549">
    <property type="entry name" value="DsrB"/>
    <property type="match status" value="1"/>
</dbReference>
<dbReference type="InterPro" id="IPR019717">
    <property type="entry name" value="Dextransucrase_DSRB"/>
</dbReference>
<dbReference type="NCBIfam" id="NF007981">
    <property type="entry name" value="PRK10708.1"/>
    <property type="match status" value="1"/>
</dbReference>
<dbReference type="Pfam" id="PF10781">
    <property type="entry name" value="DSRB"/>
    <property type="match status" value="1"/>
</dbReference>
<organism>
    <name type="scientific">Yersinia pestis (strain Pestoides F)</name>
    <dbReference type="NCBI Taxonomy" id="386656"/>
    <lineage>
        <taxon>Bacteria</taxon>
        <taxon>Pseudomonadati</taxon>
        <taxon>Pseudomonadota</taxon>
        <taxon>Gammaproteobacteria</taxon>
        <taxon>Enterobacterales</taxon>
        <taxon>Yersiniaceae</taxon>
        <taxon>Yersinia</taxon>
    </lineage>
</organism>
<sequence>MKVNDRVTVKTDGGPRREGVVLEVEEFSEGVMYLVSLADYPAGVWFFNEVDSQDGTFVEPLSQ</sequence>